<dbReference type="EMBL" id="CP000767">
    <property type="protein sequence ID" value="EAT99592.1"/>
    <property type="molecule type" value="Genomic_DNA"/>
</dbReference>
<dbReference type="RefSeq" id="WP_009649499.1">
    <property type="nucleotide sequence ID" value="NC_009715.2"/>
</dbReference>
<dbReference type="SMR" id="A7H109"/>
<dbReference type="STRING" id="360105.CCV52592_1030"/>
<dbReference type="KEGG" id="ccv:CCV52592_1030"/>
<dbReference type="HOGENOM" id="CLU_037562_3_1_7"/>
<dbReference type="OrthoDB" id="5339807at2"/>
<dbReference type="Proteomes" id="UP000006380">
    <property type="component" value="Chromosome"/>
</dbReference>
<dbReference type="GO" id="GO:1990904">
    <property type="term" value="C:ribonucleoprotein complex"/>
    <property type="evidence" value="ECO:0007669"/>
    <property type="project" value="UniProtKB-KW"/>
</dbReference>
<dbReference type="GO" id="GO:0005840">
    <property type="term" value="C:ribosome"/>
    <property type="evidence" value="ECO:0007669"/>
    <property type="project" value="UniProtKB-KW"/>
</dbReference>
<dbReference type="GO" id="GO:0019843">
    <property type="term" value="F:rRNA binding"/>
    <property type="evidence" value="ECO:0007669"/>
    <property type="project" value="UniProtKB-UniRule"/>
</dbReference>
<dbReference type="GO" id="GO:0003735">
    <property type="term" value="F:structural constituent of ribosome"/>
    <property type="evidence" value="ECO:0007669"/>
    <property type="project" value="InterPro"/>
</dbReference>
<dbReference type="GO" id="GO:0006412">
    <property type="term" value="P:translation"/>
    <property type="evidence" value="ECO:0007669"/>
    <property type="project" value="UniProtKB-UniRule"/>
</dbReference>
<dbReference type="Gene3D" id="3.30.70.330">
    <property type="match status" value="1"/>
</dbReference>
<dbReference type="HAMAP" id="MF_01369_B">
    <property type="entry name" value="Ribosomal_uL23_B"/>
    <property type="match status" value="1"/>
</dbReference>
<dbReference type="InterPro" id="IPR012677">
    <property type="entry name" value="Nucleotide-bd_a/b_plait_sf"/>
</dbReference>
<dbReference type="InterPro" id="IPR013025">
    <property type="entry name" value="Ribosomal_uL23-like"/>
</dbReference>
<dbReference type="InterPro" id="IPR012678">
    <property type="entry name" value="Ribosomal_uL23/eL15/eS24_sf"/>
</dbReference>
<dbReference type="NCBIfam" id="NF004362">
    <property type="entry name" value="PRK05738.2-2"/>
    <property type="match status" value="1"/>
</dbReference>
<dbReference type="Pfam" id="PF00276">
    <property type="entry name" value="Ribosomal_L23"/>
    <property type="match status" value="1"/>
</dbReference>
<dbReference type="SUPFAM" id="SSF54189">
    <property type="entry name" value="Ribosomal proteins S24e, L23 and L15e"/>
    <property type="match status" value="1"/>
</dbReference>
<comment type="function">
    <text evidence="1">One of the early assembly proteins it binds 23S rRNA. One of the proteins that surrounds the polypeptide exit tunnel on the outside of the ribosome. Forms the main docking site for trigger factor binding to the ribosome.</text>
</comment>
<comment type="subunit">
    <text evidence="1">Part of the 50S ribosomal subunit. Contacts protein L29, and trigger factor when it is bound to the ribosome.</text>
</comment>
<comment type="similarity">
    <text evidence="1">Belongs to the universal ribosomal protein uL23 family.</text>
</comment>
<reference key="1">
    <citation type="submission" date="2007-07" db="EMBL/GenBank/DDBJ databases">
        <title>Genome sequence of Campylobacter curvus 525.92 isolated from human feces.</title>
        <authorList>
            <person name="Fouts D.E."/>
            <person name="Mongodin E.F."/>
            <person name="Puiu D."/>
            <person name="Sebastian Y."/>
            <person name="Miller W.G."/>
            <person name="Mandrell R.E."/>
            <person name="Lastovica A.J."/>
            <person name="Nelson K.E."/>
        </authorList>
    </citation>
    <scope>NUCLEOTIDE SEQUENCE [LARGE SCALE GENOMIC DNA]</scope>
    <source>
        <strain>525.92</strain>
    </source>
</reference>
<gene>
    <name evidence="1" type="primary">rplW</name>
    <name type="ordered locus">Ccur92_18470</name>
    <name type="ORF">CCV52592_1030</name>
</gene>
<accession>A7H109</accession>
<name>RL23_CAMC5</name>
<organism>
    <name type="scientific">Campylobacter curvus (strain 525.92)</name>
    <dbReference type="NCBI Taxonomy" id="360105"/>
    <lineage>
        <taxon>Bacteria</taxon>
        <taxon>Pseudomonadati</taxon>
        <taxon>Campylobacterota</taxon>
        <taxon>Epsilonproteobacteria</taxon>
        <taxon>Campylobacterales</taxon>
        <taxon>Campylobacteraceae</taxon>
        <taxon>Campylobacter</taxon>
    </lineage>
</organism>
<keyword id="KW-1185">Reference proteome</keyword>
<keyword id="KW-0687">Ribonucleoprotein</keyword>
<keyword id="KW-0689">Ribosomal protein</keyword>
<keyword id="KW-0694">RNA-binding</keyword>
<keyword id="KW-0699">rRNA-binding</keyword>
<feature type="chain" id="PRO_1000144544" description="Large ribosomal subunit protein uL23">
    <location>
        <begin position="1"/>
        <end position="93"/>
    </location>
</feature>
<evidence type="ECO:0000255" key="1">
    <source>
        <dbReference type="HAMAP-Rule" id="MF_01369"/>
    </source>
</evidence>
<evidence type="ECO:0000305" key="2"/>
<sequence length="93" mass="10495">MADITDIKTIIYTEKTLGLQEQGVVVIQTSPKVTKNGLKEVLKEYFGVTPLRINSLRITGKVKRFRGKVGQRDEIKKFYVKLPEGVSLENTEA</sequence>
<proteinExistence type="inferred from homology"/>
<protein>
    <recommendedName>
        <fullName evidence="1">Large ribosomal subunit protein uL23</fullName>
    </recommendedName>
    <alternativeName>
        <fullName evidence="2">50S ribosomal protein L23</fullName>
    </alternativeName>
</protein>